<organism>
    <name type="scientific">Ranoidea genimaculata</name>
    <name type="common">Brown-spotted tree frog</name>
    <name type="synonym">Litoria genimaculata</name>
    <dbReference type="NCBI Taxonomy" id="95132"/>
    <lineage>
        <taxon>Eukaryota</taxon>
        <taxon>Metazoa</taxon>
        <taxon>Chordata</taxon>
        <taxon>Craniata</taxon>
        <taxon>Vertebrata</taxon>
        <taxon>Euteleostomi</taxon>
        <taxon>Amphibia</taxon>
        <taxon>Batrachia</taxon>
        <taxon>Anura</taxon>
        <taxon>Neobatrachia</taxon>
        <taxon>Hyloidea</taxon>
        <taxon>Hylidae</taxon>
        <taxon>Pelodryadinae</taxon>
        <taxon>Ranoidea</taxon>
    </lineage>
</organism>
<dbReference type="TCDB" id="1.C.76.1.2">
    <property type="family name" value="the pore-forming maculatin peptide (maculatin) family"/>
</dbReference>
<dbReference type="GO" id="GO:0005576">
    <property type="term" value="C:extracellular region"/>
    <property type="evidence" value="ECO:0007669"/>
    <property type="project" value="UniProtKB-SubCell"/>
</dbReference>
<dbReference type="GO" id="GO:0042742">
    <property type="term" value="P:defense response to bacterium"/>
    <property type="evidence" value="ECO:0007669"/>
    <property type="project" value="UniProtKB-KW"/>
</dbReference>
<dbReference type="InterPro" id="IPR013157">
    <property type="entry name" value="Aurein_antimicrobial_peptide"/>
</dbReference>
<dbReference type="Pfam" id="PF08256">
    <property type="entry name" value="Antimicrobial20"/>
    <property type="match status" value="1"/>
</dbReference>
<accession>P82068</accession>
<feature type="peptide" id="PRO_0000043812" description="Maculatin-2.1">
    <location>
        <begin position="1"/>
        <end position="18"/>
    </location>
</feature>
<feature type="modified residue" description="Threonine amide" evidence="1">
    <location>
        <position position="18"/>
    </location>
</feature>
<proteinExistence type="evidence at protein level"/>
<comment type="function">
    <text>Shows antibacterial activity against B.cereus, L.innocua, M.luteus, S.aureus, S.epidermidis and S.uberis.</text>
</comment>
<comment type="subcellular location">
    <subcellularLocation>
        <location>Secreted</location>
    </subcellularLocation>
</comment>
<comment type="tissue specificity">
    <text>Expressed by the skin dorsal glands.</text>
</comment>
<comment type="mass spectrometry" mass="1878.0" method="FAB" evidence="1"/>
<sequence length="18" mass="1879">GFVDFLKKVAGTIANVVT</sequence>
<evidence type="ECO:0000269" key="1">
    <source>
    </source>
</evidence>
<reference key="1">
    <citation type="journal article" date="1998" name="J. Pept. Sci.">
        <title>The maculatin peptides from the skin glands of the tree frog Litoria genimaculata. A comparison of the structures and antibacterial activities of maculatin 1.1 and caerin 1.1.</title>
        <authorList>
            <person name="Rozek T."/>
            <person name="Waugh R.J."/>
            <person name="Steinborner S.T."/>
            <person name="Bowie J.H."/>
            <person name="Tyler M.J."/>
            <person name="Wallace J.C."/>
        </authorList>
    </citation>
    <scope>PROTEIN SEQUENCE</scope>
    <scope>AMIDATION AT THR-18</scope>
    <scope>MASS SPECTROMETRY</scope>
</reference>
<keyword id="KW-0027">Amidation</keyword>
<keyword id="KW-0878">Amphibian defense peptide</keyword>
<keyword id="KW-0044">Antibiotic</keyword>
<keyword id="KW-0929">Antimicrobial</keyword>
<keyword id="KW-0903">Direct protein sequencing</keyword>
<keyword id="KW-0964">Secreted</keyword>
<protein>
    <recommendedName>
        <fullName>Maculatin-2.1</fullName>
    </recommendedName>
</protein>
<name>MCU21_RANGE</name>